<proteinExistence type="inferred from homology"/>
<gene>
    <name evidence="1" type="primary">atpE</name>
</gene>
<dbReference type="EMBL" id="DQ897681">
    <property type="protein sequence ID" value="ABI17268.1"/>
    <property type="molecule type" value="Genomic_DNA"/>
</dbReference>
<dbReference type="RefSeq" id="YP_784077.1">
    <property type="nucleotide sequence ID" value="NC_008454.1"/>
</dbReference>
<dbReference type="SMR" id="Q06FV4"/>
<dbReference type="GeneID" id="4362898"/>
<dbReference type="GO" id="GO:0009535">
    <property type="term" value="C:chloroplast thylakoid membrane"/>
    <property type="evidence" value="ECO:0007669"/>
    <property type="project" value="UniProtKB-SubCell"/>
</dbReference>
<dbReference type="GO" id="GO:0045259">
    <property type="term" value="C:proton-transporting ATP synthase complex"/>
    <property type="evidence" value="ECO:0007669"/>
    <property type="project" value="UniProtKB-KW"/>
</dbReference>
<dbReference type="GO" id="GO:0005524">
    <property type="term" value="F:ATP binding"/>
    <property type="evidence" value="ECO:0007669"/>
    <property type="project" value="UniProtKB-UniRule"/>
</dbReference>
<dbReference type="GO" id="GO:0046933">
    <property type="term" value="F:proton-transporting ATP synthase activity, rotational mechanism"/>
    <property type="evidence" value="ECO:0007669"/>
    <property type="project" value="UniProtKB-UniRule"/>
</dbReference>
<dbReference type="CDD" id="cd12152">
    <property type="entry name" value="F1-ATPase_delta"/>
    <property type="match status" value="1"/>
</dbReference>
<dbReference type="FunFam" id="2.60.15.10:FF:000002">
    <property type="entry name" value="ATP synthase epsilon chain, chloroplastic"/>
    <property type="match status" value="1"/>
</dbReference>
<dbReference type="Gene3D" id="6.10.140.480">
    <property type="match status" value="1"/>
</dbReference>
<dbReference type="Gene3D" id="2.60.15.10">
    <property type="entry name" value="F0F1 ATP synthase delta/epsilon subunit, N-terminal"/>
    <property type="match status" value="1"/>
</dbReference>
<dbReference type="HAMAP" id="MF_00530">
    <property type="entry name" value="ATP_synth_epsil_bac"/>
    <property type="match status" value="1"/>
</dbReference>
<dbReference type="InterPro" id="IPR001469">
    <property type="entry name" value="ATP_synth_F1_dsu/esu"/>
</dbReference>
<dbReference type="InterPro" id="IPR020546">
    <property type="entry name" value="ATP_synth_F1_dsu/esu_N"/>
</dbReference>
<dbReference type="InterPro" id="IPR020547">
    <property type="entry name" value="ATP_synth_F1_esu_C"/>
</dbReference>
<dbReference type="InterPro" id="IPR036771">
    <property type="entry name" value="ATPsynth_dsu/esu_N"/>
</dbReference>
<dbReference type="NCBIfam" id="TIGR01216">
    <property type="entry name" value="ATP_synt_epsi"/>
    <property type="match status" value="1"/>
</dbReference>
<dbReference type="PANTHER" id="PTHR13822">
    <property type="entry name" value="ATP SYNTHASE DELTA/EPSILON CHAIN"/>
    <property type="match status" value="1"/>
</dbReference>
<dbReference type="PANTHER" id="PTHR13822:SF10">
    <property type="entry name" value="ATP SYNTHASE EPSILON CHAIN, CHLOROPLASTIC"/>
    <property type="match status" value="1"/>
</dbReference>
<dbReference type="Pfam" id="PF00401">
    <property type="entry name" value="ATP-synt_DE"/>
    <property type="match status" value="1"/>
</dbReference>
<dbReference type="Pfam" id="PF02823">
    <property type="entry name" value="ATP-synt_DE_N"/>
    <property type="match status" value="1"/>
</dbReference>
<dbReference type="SUPFAM" id="SSF51344">
    <property type="entry name" value="Epsilon subunit of F1F0-ATP synthase N-terminal domain"/>
    <property type="match status" value="1"/>
</dbReference>
<feature type="chain" id="PRO_0000275211" description="ATP synthase epsilon chain, chloroplastic">
    <location>
        <begin position="1"/>
        <end position="134"/>
    </location>
</feature>
<geneLocation type="chloroplast"/>
<sequence length="134" mass="14971">MTLNLCVLTPNRILWDSEVKEIILPTNSGQIGVLPNHASIVTTIDIGVLRIRHFNDQWFTIALMGGFTRIRNNEITILATAAEKGSDIDPQEAQQTLQIAEDSLRKAEDKRQRIEAKLAIKRASTRVKAINPIS</sequence>
<organism>
    <name type="scientific">Pelargonium hortorum</name>
    <name type="common">Common geranium</name>
    <name type="synonym">Pelargonium inquinans x Pelargonium zonale</name>
    <dbReference type="NCBI Taxonomy" id="4031"/>
    <lineage>
        <taxon>Eukaryota</taxon>
        <taxon>Viridiplantae</taxon>
        <taxon>Streptophyta</taxon>
        <taxon>Embryophyta</taxon>
        <taxon>Tracheophyta</taxon>
        <taxon>Spermatophyta</taxon>
        <taxon>Magnoliopsida</taxon>
        <taxon>eudicotyledons</taxon>
        <taxon>Gunneridae</taxon>
        <taxon>Pentapetalae</taxon>
        <taxon>rosids</taxon>
        <taxon>malvids</taxon>
        <taxon>Geraniales</taxon>
        <taxon>Geraniaceae</taxon>
        <taxon>Pelargonium</taxon>
    </lineage>
</organism>
<comment type="function">
    <text evidence="1">Produces ATP from ADP in the presence of a proton gradient across the membrane.</text>
</comment>
<comment type="subunit">
    <text evidence="1">F-type ATPases have 2 components, CF(1) - the catalytic core - and CF(0) - the membrane proton channel. CF(1) has five subunits: alpha(3), beta(3), gamma(1), delta(1), epsilon(1). CF(0) has three main subunits: a, b and c.</text>
</comment>
<comment type="subcellular location">
    <subcellularLocation>
        <location evidence="1">Plastid</location>
        <location evidence="1">Chloroplast thylakoid membrane</location>
        <topology evidence="1">Peripheral membrane protein</topology>
    </subcellularLocation>
</comment>
<comment type="similarity">
    <text evidence="1">Belongs to the ATPase epsilon chain family.</text>
</comment>
<name>ATPE_PELHO</name>
<accession>Q06FV4</accession>
<keyword id="KW-0066">ATP synthesis</keyword>
<keyword id="KW-0139">CF(1)</keyword>
<keyword id="KW-0150">Chloroplast</keyword>
<keyword id="KW-0375">Hydrogen ion transport</keyword>
<keyword id="KW-0406">Ion transport</keyword>
<keyword id="KW-0472">Membrane</keyword>
<keyword id="KW-0934">Plastid</keyword>
<keyword id="KW-0793">Thylakoid</keyword>
<keyword id="KW-0813">Transport</keyword>
<evidence type="ECO:0000255" key="1">
    <source>
        <dbReference type="HAMAP-Rule" id="MF_00530"/>
    </source>
</evidence>
<reference key="1">
    <citation type="journal article" date="2006" name="Mol. Biol. Evol.">
        <title>The complete chloroplast genome sequence of Pelargonium x hortorum: organization and evolution of the largest and most highly rearranged chloroplast genome of land plants.</title>
        <authorList>
            <person name="Chumley T.W."/>
            <person name="Palmer J.D."/>
            <person name="Mower J.P."/>
            <person name="Fourcade H.M."/>
            <person name="Calie P.J."/>
            <person name="Boore J.L."/>
            <person name="Jansen R.K."/>
        </authorList>
    </citation>
    <scope>NUCLEOTIDE SEQUENCE [LARGE SCALE GENOMIC DNA]</scope>
    <source>
        <strain>cv. Ringo White</strain>
    </source>
</reference>
<protein>
    <recommendedName>
        <fullName evidence="1">ATP synthase epsilon chain, chloroplastic</fullName>
    </recommendedName>
    <alternativeName>
        <fullName evidence="1">ATP synthase F1 sector epsilon subunit</fullName>
    </alternativeName>
    <alternativeName>
        <fullName evidence="1">F-ATPase epsilon subunit</fullName>
    </alternativeName>
</protein>